<keyword id="KW-1003">Cell membrane</keyword>
<keyword id="KW-0472">Membrane</keyword>
<keyword id="KW-1185">Reference proteome</keyword>
<keyword id="KW-0677">Repeat</keyword>
<keyword id="KW-0762">Sugar transport</keyword>
<keyword id="KW-0812">Transmembrane</keyword>
<keyword id="KW-1133">Transmembrane helix</keyword>
<keyword id="KW-0813">Transport</keyword>
<gene>
    <name type="primary">SWEET1B</name>
    <name type="ORF">OsI_20031</name>
</gene>
<dbReference type="EMBL" id="CM000130">
    <property type="protein sequence ID" value="EEC79257.1"/>
    <property type="molecule type" value="Genomic_DNA"/>
</dbReference>
<dbReference type="SMR" id="B8AYH1"/>
<dbReference type="STRING" id="39946.B8AYH1"/>
<dbReference type="EnsemblPlants" id="BGIOSGA019904-TA">
    <property type="protein sequence ID" value="BGIOSGA019904-PA"/>
    <property type="gene ID" value="BGIOSGA019904"/>
</dbReference>
<dbReference type="EnsemblPlants" id="OsGoSa_05g0017780.01">
    <property type="protein sequence ID" value="OsGoSa_05g0017780.01"/>
    <property type="gene ID" value="OsGoSa_05g0017780"/>
</dbReference>
<dbReference type="EnsemblPlants" id="OsIR64_05g0017390.01">
    <property type="protein sequence ID" value="OsIR64_05g0017390.01"/>
    <property type="gene ID" value="OsIR64_05g0017390"/>
</dbReference>
<dbReference type="EnsemblPlants" id="OsKYG_05g0017640.01">
    <property type="protein sequence ID" value="OsKYG_05g0017640.01"/>
    <property type="gene ID" value="OsKYG_05g0017640"/>
</dbReference>
<dbReference type="EnsemblPlants" id="OsLaMu_05g0017840.01">
    <property type="protein sequence ID" value="OsLaMu_05g0017840.01"/>
    <property type="gene ID" value="OsLaMu_05g0017840"/>
</dbReference>
<dbReference type="EnsemblPlants" id="OsLima_05g0017730.01">
    <property type="protein sequence ID" value="OsLima_05g0017730.01"/>
    <property type="gene ID" value="OsLima_05g0017730"/>
</dbReference>
<dbReference type="EnsemblPlants" id="OsLiXu_05g0017790.01">
    <property type="protein sequence ID" value="OsLiXu_05g0017790.01"/>
    <property type="gene ID" value="OsLiXu_05g0017790"/>
</dbReference>
<dbReference type="EnsemblPlants" id="OsMH63_05G017750_01">
    <property type="protein sequence ID" value="OsMH63_05G017750_01"/>
    <property type="gene ID" value="OsMH63_05G017750"/>
</dbReference>
<dbReference type="EnsemblPlants" id="OsPr106_05g0017910.01">
    <property type="protein sequence ID" value="OsPr106_05g0017910.01"/>
    <property type="gene ID" value="OsPr106_05g0017910"/>
</dbReference>
<dbReference type="EnsemblPlants" id="OsZS97_05G017990_01">
    <property type="protein sequence ID" value="OsZS97_05G017990_01"/>
    <property type="gene ID" value="OsZS97_05G017990"/>
</dbReference>
<dbReference type="Gramene" id="BGIOSGA019904-TA">
    <property type="protein sequence ID" value="BGIOSGA019904-PA"/>
    <property type="gene ID" value="BGIOSGA019904"/>
</dbReference>
<dbReference type="Gramene" id="OsGoSa_05g0017780.01">
    <property type="protein sequence ID" value="OsGoSa_05g0017780.01"/>
    <property type="gene ID" value="OsGoSa_05g0017780"/>
</dbReference>
<dbReference type="Gramene" id="OsIR64_05g0017390.01">
    <property type="protein sequence ID" value="OsIR64_05g0017390.01"/>
    <property type="gene ID" value="OsIR64_05g0017390"/>
</dbReference>
<dbReference type="Gramene" id="OsKYG_05g0017640.01">
    <property type="protein sequence ID" value="OsKYG_05g0017640.01"/>
    <property type="gene ID" value="OsKYG_05g0017640"/>
</dbReference>
<dbReference type="Gramene" id="OsLaMu_05g0017840.01">
    <property type="protein sequence ID" value="OsLaMu_05g0017840.01"/>
    <property type="gene ID" value="OsLaMu_05g0017840"/>
</dbReference>
<dbReference type="Gramene" id="OsLima_05g0017730.01">
    <property type="protein sequence ID" value="OsLima_05g0017730.01"/>
    <property type="gene ID" value="OsLima_05g0017730"/>
</dbReference>
<dbReference type="Gramene" id="OsLiXu_05g0017790.01">
    <property type="protein sequence ID" value="OsLiXu_05g0017790.01"/>
    <property type="gene ID" value="OsLiXu_05g0017790"/>
</dbReference>
<dbReference type="Gramene" id="OsMH63_05G017750_01">
    <property type="protein sequence ID" value="OsMH63_05G017750_01"/>
    <property type="gene ID" value="OsMH63_05G017750"/>
</dbReference>
<dbReference type="Gramene" id="OsPr106_05g0017910.01">
    <property type="protein sequence ID" value="OsPr106_05g0017910.01"/>
    <property type="gene ID" value="OsPr106_05g0017910"/>
</dbReference>
<dbReference type="Gramene" id="OsZS97_05G017990_01">
    <property type="protein sequence ID" value="OsZS97_05G017990_01"/>
    <property type="gene ID" value="OsZS97_05G017990"/>
</dbReference>
<dbReference type="HOGENOM" id="CLU_048643_1_0_1"/>
<dbReference type="OMA" id="HMNAMEM"/>
<dbReference type="OrthoDB" id="409725at2759"/>
<dbReference type="Proteomes" id="UP000007015">
    <property type="component" value="Chromosome 5"/>
</dbReference>
<dbReference type="GO" id="GO:0005886">
    <property type="term" value="C:plasma membrane"/>
    <property type="evidence" value="ECO:0000250"/>
    <property type="project" value="UniProtKB"/>
</dbReference>
<dbReference type="GO" id="GO:0042803">
    <property type="term" value="F:protein homodimerization activity"/>
    <property type="evidence" value="ECO:0000250"/>
    <property type="project" value="UniProtKB"/>
</dbReference>
<dbReference type="GO" id="GO:0051119">
    <property type="term" value="F:sugar transmembrane transporter activity"/>
    <property type="evidence" value="ECO:0000250"/>
    <property type="project" value="UniProtKB"/>
</dbReference>
<dbReference type="FunFam" id="1.20.1280.290:FF:000002">
    <property type="entry name" value="Bidirectional sugar transporter SWEET"/>
    <property type="match status" value="1"/>
</dbReference>
<dbReference type="FunFam" id="1.20.1280.290:FF:000014">
    <property type="entry name" value="Bidirectional sugar transporter SWEET"/>
    <property type="match status" value="1"/>
</dbReference>
<dbReference type="Gene3D" id="1.20.1280.290">
    <property type="match status" value="2"/>
</dbReference>
<dbReference type="InterPro" id="IPR047664">
    <property type="entry name" value="SWEET"/>
</dbReference>
<dbReference type="InterPro" id="IPR004316">
    <property type="entry name" value="SWEET_rpt"/>
</dbReference>
<dbReference type="PANTHER" id="PTHR10791:SF44">
    <property type="entry name" value="BIDIRECTIONAL SUGAR TRANSPORTER SWEET1"/>
    <property type="match status" value="1"/>
</dbReference>
<dbReference type="PANTHER" id="PTHR10791">
    <property type="entry name" value="RAG1-ACTIVATING PROTEIN 1"/>
    <property type="match status" value="1"/>
</dbReference>
<dbReference type="Pfam" id="PF03083">
    <property type="entry name" value="MtN3_slv"/>
    <property type="match status" value="2"/>
</dbReference>
<feature type="chain" id="PRO_0000404139" description="Bidirectional sugar transporter SWEET1b">
    <location>
        <begin position="1"/>
        <end position="261"/>
    </location>
</feature>
<feature type="topological domain" description="Extracellular" evidence="2">
    <location>
        <begin position="1"/>
        <end position="6"/>
    </location>
</feature>
<feature type="transmembrane region" description="Helical; Name=1" evidence="2">
    <location>
        <begin position="7"/>
        <end position="27"/>
    </location>
</feature>
<feature type="topological domain" description="Cytoplasmic" evidence="2">
    <location>
        <begin position="28"/>
        <end position="42"/>
    </location>
</feature>
<feature type="transmembrane region" description="Helical; Name=2" evidence="2">
    <location>
        <begin position="43"/>
        <end position="63"/>
    </location>
</feature>
<feature type="topological domain" description="Extracellular" evidence="2">
    <location>
        <begin position="64"/>
        <end position="71"/>
    </location>
</feature>
<feature type="transmembrane region" description="Helical; Name=3" evidence="2">
    <location>
        <begin position="72"/>
        <end position="92"/>
    </location>
</feature>
<feature type="topological domain" description="Cytoplasmic" evidence="2">
    <location>
        <begin position="93"/>
        <end position="101"/>
    </location>
</feature>
<feature type="transmembrane region" description="Helical; Name=4" evidence="2">
    <location>
        <begin position="102"/>
        <end position="122"/>
    </location>
</feature>
<feature type="topological domain" description="Extracellular" evidence="2">
    <location>
        <begin position="123"/>
        <end position="129"/>
    </location>
</feature>
<feature type="transmembrane region" description="Helical; Name=5" evidence="2">
    <location>
        <begin position="130"/>
        <end position="150"/>
    </location>
</feature>
<feature type="topological domain" description="Cytoplasmic" evidence="2">
    <location>
        <begin position="151"/>
        <end position="164"/>
    </location>
</feature>
<feature type="transmembrane region" description="Helical; Name=6" evidence="2">
    <location>
        <begin position="165"/>
        <end position="185"/>
    </location>
</feature>
<feature type="topological domain" description="Extracellular" evidence="2">
    <location>
        <begin position="186"/>
        <end position="189"/>
    </location>
</feature>
<feature type="transmembrane region" description="Helical; Name=7" evidence="2">
    <location>
        <begin position="190"/>
        <end position="210"/>
    </location>
</feature>
<feature type="topological domain" description="Cytoplasmic" evidence="2">
    <location>
        <begin position="211"/>
        <end position="261"/>
    </location>
</feature>
<feature type="domain" description="MtN3/slv 1">
    <location>
        <begin position="7"/>
        <end position="95"/>
    </location>
</feature>
<feature type="domain" description="MtN3/slv 2">
    <location>
        <begin position="133"/>
        <end position="215"/>
    </location>
</feature>
<feature type="region of interest" description="Disordered" evidence="3">
    <location>
        <begin position="218"/>
        <end position="261"/>
    </location>
</feature>
<name>SWT1B_ORYSI</name>
<organism>
    <name type="scientific">Oryza sativa subsp. indica</name>
    <name type="common">Rice</name>
    <dbReference type="NCBI Taxonomy" id="39946"/>
    <lineage>
        <taxon>Eukaryota</taxon>
        <taxon>Viridiplantae</taxon>
        <taxon>Streptophyta</taxon>
        <taxon>Embryophyta</taxon>
        <taxon>Tracheophyta</taxon>
        <taxon>Spermatophyta</taxon>
        <taxon>Magnoliopsida</taxon>
        <taxon>Liliopsida</taxon>
        <taxon>Poales</taxon>
        <taxon>Poaceae</taxon>
        <taxon>BOP clade</taxon>
        <taxon>Oryzoideae</taxon>
        <taxon>Oryzeae</taxon>
        <taxon>Oryzinae</taxon>
        <taxon>Oryza</taxon>
        <taxon>Oryza sativa</taxon>
    </lineage>
</organism>
<sequence length="261" mass="27618">MEDLAKFLFGVSGNVIALFLFLSPVPTFWRIIRRKSTEDFSGVPYNMTLINCLLSAWYGLPFVSPNNILVSTINGAGAVIETAYVVVFLVFASTHKTRLRTLGLAAAVASVFAAVALVSLLALHGQHRKLLCGVAATVCSICMYASPLSIMRLVIKTKSVEYMPFLLSLAVFLCGTSWFIYGLLGRDPFVTIPNGCGSFLGAVQLVLYAIYRNNKGAGGGSGGKQAGDDDVEMAEGRNNKVADGGAAEDDSTAGGKAGTEV</sequence>
<accession>B8AYH1</accession>
<proteinExistence type="inferred from homology"/>
<comment type="function">
    <text evidence="1">Mediates transport of sugars across the plasma membrane. Can transport glucose and galactose, but not fructose, mannose and sucrose.</text>
</comment>
<comment type="catalytic activity">
    <reaction evidence="1">
        <text>D-glucose(out) = D-glucose(in)</text>
        <dbReference type="Rhea" id="RHEA:60376"/>
        <dbReference type="ChEBI" id="CHEBI:4167"/>
    </reaction>
</comment>
<comment type="catalytic activity">
    <reaction evidence="1">
        <text>D-galactose(in) = D-galactose(out)</text>
        <dbReference type="Rhea" id="RHEA:34915"/>
        <dbReference type="ChEBI" id="CHEBI:4139"/>
    </reaction>
</comment>
<comment type="subunit">
    <text evidence="1">Forms homodimers.</text>
</comment>
<comment type="subcellular location">
    <subcellularLocation>
        <location evidence="1">Cell membrane</location>
        <topology evidence="2">Multi-pass membrane protein</topology>
    </subcellularLocation>
</comment>
<comment type="similarity">
    <text evidence="4">Belongs to the SWEET sugar transporter family.</text>
</comment>
<evidence type="ECO:0000250" key="1">
    <source>
        <dbReference type="UniProtKB" id="Q60EC2"/>
    </source>
</evidence>
<evidence type="ECO:0000255" key="2"/>
<evidence type="ECO:0000256" key="3">
    <source>
        <dbReference type="SAM" id="MobiDB-lite"/>
    </source>
</evidence>
<evidence type="ECO:0000305" key="4"/>
<protein>
    <recommendedName>
        <fullName>Bidirectional sugar transporter SWEET1b</fullName>
        <shortName>OsSWEET1b</shortName>
    </recommendedName>
</protein>
<reference key="1">
    <citation type="journal article" date="2005" name="PLoS Biol.">
        <title>The genomes of Oryza sativa: a history of duplications.</title>
        <authorList>
            <person name="Yu J."/>
            <person name="Wang J."/>
            <person name="Lin W."/>
            <person name="Li S."/>
            <person name="Li H."/>
            <person name="Zhou J."/>
            <person name="Ni P."/>
            <person name="Dong W."/>
            <person name="Hu S."/>
            <person name="Zeng C."/>
            <person name="Zhang J."/>
            <person name="Zhang Y."/>
            <person name="Li R."/>
            <person name="Xu Z."/>
            <person name="Li S."/>
            <person name="Li X."/>
            <person name="Zheng H."/>
            <person name="Cong L."/>
            <person name="Lin L."/>
            <person name="Yin J."/>
            <person name="Geng J."/>
            <person name="Li G."/>
            <person name="Shi J."/>
            <person name="Liu J."/>
            <person name="Lv H."/>
            <person name="Li J."/>
            <person name="Wang J."/>
            <person name="Deng Y."/>
            <person name="Ran L."/>
            <person name="Shi X."/>
            <person name="Wang X."/>
            <person name="Wu Q."/>
            <person name="Li C."/>
            <person name="Ren X."/>
            <person name="Wang J."/>
            <person name="Wang X."/>
            <person name="Li D."/>
            <person name="Liu D."/>
            <person name="Zhang X."/>
            <person name="Ji Z."/>
            <person name="Zhao W."/>
            <person name="Sun Y."/>
            <person name="Zhang Z."/>
            <person name="Bao J."/>
            <person name="Han Y."/>
            <person name="Dong L."/>
            <person name="Ji J."/>
            <person name="Chen P."/>
            <person name="Wu S."/>
            <person name="Liu J."/>
            <person name="Xiao Y."/>
            <person name="Bu D."/>
            <person name="Tan J."/>
            <person name="Yang L."/>
            <person name="Ye C."/>
            <person name="Zhang J."/>
            <person name="Xu J."/>
            <person name="Zhou Y."/>
            <person name="Yu Y."/>
            <person name="Zhang B."/>
            <person name="Zhuang S."/>
            <person name="Wei H."/>
            <person name="Liu B."/>
            <person name="Lei M."/>
            <person name="Yu H."/>
            <person name="Li Y."/>
            <person name="Xu H."/>
            <person name="Wei S."/>
            <person name="He X."/>
            <person name="Fang L."/>
            <person name="Zhang Z."/>
            <person name="Zhang Y."/>
            <person name="Huang X."/>
            <person name="Su Z."/>
            <person name="Tong W."/>
            <person name="Li J."/>
            <person name="Tong Z."/>
            <person name="Li S."/>
            <person name="Ye J."/>
            <person name="Wang L."/>
            <person name="Fang L."/>
            <person name="Lei T."/>
            <person name="Chen C.-S."/>
            <person name="Chen H.-C."/>
            <person name="Xu Z."/>
            <person name="Li H."/>
            <person name="Huang H."/>
            <person name="Zhang F."/>
            <person name="Xu H."/>
            <person name="Li N."/>
            <person name="Zhao C."/>
            <person name="Li S."/>
            <person name="Dong L."/>
            <person name="Huang Y."/>
            <person name="Li L."/>
            <person name="Xi Y."/>
            <person name="Qi Q."/>
            <person name="Li W."/>
            <person name="Zhang B."/>
            <person name="Hu W."/>
            <person name="Zhang Y."/>
            <person name="Tian X."/>
            <person name="Jiao Y."/>
            <person name="Liang X."/>
            <person name="Jin J."/>
            <person name="Gao L."/>
            <person name="Zheng W."/>
            <person name="Hao B."/>
            <person name="Liu S.-M."/>
            <person name="Wang W."/>
            <person name="Yuan L."/>
            <person name="Cao M."/>
            <person name="McDermott J."/>
            <person name="Samudrala R."/>
            <person name="Wang J."/>
            <person name="Wong G.K.-S."/>
            <person name="Yang H."/>
        </authorList>
    </citation>
    <scope>NUCLEOTIDE SEQUENCE [LARGE SCALE GENOMIC DNA]</scope>
    <source>
        <strain>cv. 93-11</strain>
    </source>
</reference>